<comment type="similarity">
    <text evidence="1">Belongs to the UPF0178 family.</text>
</comment>
<sequence>MKIWIDADGCPVVDLTIRLSRGYEVFLVCDTAHQFNRAGATTITIGQGHDAVDFAIVNRMAPGDIVVTQDYGLAALALARKGQAIDQNGRVFTNENIDFLLHTRHVGQEIRRAGGRTKGPKKRTRQEDASFEQSFSRLLTEKTD</sequence>
<name>Y1155_EXIS2</name>
<gene>
    <name type="ordered locus">Exig_1155</name>
</gene>
<proteinExistence type="inferred from homology"/>
<accession>B1YED2</accession>
<feature type="chain" id="PRO_1000126194" description="UPF0178 protein Exig_1155">
    <location>
        <begin position="1"/>
        <end position="144"/>
    </location>
</feature>
<feature type="region of interest" description="Disordered" evidence="2">
    <location>
        <begin position="110"/>
        <end position="144"/>
    </location>
</feature>
<feature type="compositionally biased region" description="Basic residues" evidence="2">
    <location>
        <begin position="113"/>
        <end position="124"/>
    </location>
</feature>
<dbReference type="EMBL" id="CP001022">
    <property type="protein sequence ID" value="ACB60634.1"/>
    <property type="molecule type" value="Genomic_DNA"/>
</dbReference>
<dbReference type="RefSeq" id="WP_012370055.1">
    <property type="nucleotide sequence ID" value="NC_010556.1"/>
</dbReference>
<dbReference type="STRING" id="262543.Exig_1155"/>
<dbReference type="KEGG" id="esi:Exig_1155"/>
<dbReference type="eggNOG" id="COG1671">
    <property type="taxonomic scope" value="Bacteria"/>
</dbReference>
<dbReference type="HOGENOM" id="CLU_106619_0_0_9"/>
<dbReference type="OrthoDB" id="9798918at2"/>
<dbReference type="Proteomes" id="UP000001681">
    <property type="component" value="Chromosome"/>
</dbReference>
<dbReference type="HAMAP" id="MF_00489">
    <property type="entry name" value="UPF0178"/>
    <property type="match status" value="1"/>
</dbReference>
<dbReference type="InterPro" id="IPR003791">
    <property type="entry name" value="UPF0178"/>
</dbReference>
<dbReference type="NCBIfam" id="NF001095">
    <property type="entry name" value="PRK00124.1"/>
    <property type="match status" value="1"/>
</dbReference>
<dbReference type="PANTHER" id="PTHR35146">
    <property type="entry name" value="UPF0178 PROTEIN YAII"/>
    <property type="match status" value="1"/>
</dbReference>
<dbReference type="PANTHER" id="PTHR35146:SF1">
    <property type="entry name" value="UPF0178 PROTEIN YAII"/>
    <property type="match status" value="1"/>
</dbReference>
<dbReference type="Pfam" id="PF02639">
    <property type="entry name" value="DUF188"/>
    <property type="match status" value="1"/>
</dbReference>
<reference key="1">
    <citation type="submission" date="2008-04" db="EMBL/GenBank/DDBJ databases">
        <title>Complete sequence of chromosome of Exiguobacterium sibiricum 255-15.</title>
        <authorList>
            <consortium name="US DOE Joint Genome Institute"/>
            <person name="Copeland A."/>
            <person name="Lucas S."/>
            <person name="Lapidus A."/>
            <person name="Glavina del Rio T."/>
            <person name="Dalin E."/>
            <person name="Tice H."/>
            <person name="Bruce D."/>
            <person name="Goodwin L."/>
            <person name="Pitluck S."/>
            <person name="Kiss H."/>
            <person name="Chertkov O."/>
            <person name="Monk C."/>
            <person name="Brettin T."/>
            <person name="Detter J.C."/>
            <person name="Han C."/>
            <person name="Kuske C.R."/>
            <person name="Schmutz J."/>
            <person name="Larimer F."/>
            <person name="Land M."/>
            <person name="Hauser L."/>
            <person name="Kyrpides N."/>
            <person name="Mikhailova N."/>
            <person name="Vishnivetskaya T."/>
            <person name="Rodrigues D.F."/>
            <person name="Gilichinsky D."/>
            <person name="Tiedje J."/>
            <person name="Richardson P."/>
        </authorList>
    </citation>
    <scope>NUCLEOTIDE SEQUENCE [LARGE SCALE GENOMIC DNA]</scope>
    <source>
        <strain>DSM 17290 / CCUG 55495 / CIP 109462 / JCM 13490 / 255-15</strain>
    </source>
</reference>
<evidence type="ECO:0000255" key="1">
    <source>
        <dbReference type="HAMAP-Rule" id="MF_00489"/>
    </source>
</evidence>
<evidence type="ECO:0000256" key="2">
    <source>
        <dbReference type="SAM" id="MobiDB-lite"/>
    </source>
</evidence>
<keyword id="KW-1185">Reference proteome</keyword>
<protein>
    <recommendedName>
        <fullName evidence="1">UPF0178 protein Exig_1155</fullName>
    </recommendedName>
</protein>
<organism>
    <name type="scientific">Exiguobacterium sibiricum (strain DSM 17290 / CCUG 55495 / CIP 109462 / JCM 13490 / 255-15)</name>
    <dbReference type="NCBI Taxonomy" id="262543"/>
    <lineage>
        <taxon>Bacteria</taxon>
        <taxon>Bacillati</taxon>
        <taxon>Bacillota</taxon>
        <taxon>Bacilli</taxon>
        <taxon>Bacillales</taxon>
        <taxon>Bacillales Family XII. Incertae Sedis</taxon>
        <taxon>Exiguobacterium</taxon>
    </lineage>
</organism>